<feature type="chain" id="PRO_0000336115" description="UPF0102 protein ABO_0585">
    <location>
        <begin position="1"/>
        <end position="125"/>
    </location>
</feature>
<dbReference type="EMBL" id="AM286690">
    <property type="protein sequence ID" value="CAL16033.1"/>
    <property type="molecule type" value="Genomic_DNA"/>
</dbReference>
<dbReference type="RefSeq" id="WP_011587871.1">
    <property type="nucleotide sequence ID" value="NC_008260.1"/>
</dbReference>
<dbReference type="SMR" id="Q0VS15"/>
<dbReference type="STRING" id="393595.ABO_0585"/>
<dbReference type="KEGG" id="abo:ABO_0585"/>
<dbReference type="eggNOG" id="COG0792">
    <property type="taxonomic scope" value="Bacteria"/>
</dbReference>
<dbReference type="HOGENOM" id="CLU_115353_1_0_6"/>
<dbReference type="OrthoDB" id="9794876at2"/>
<dbReference type="Proteomes" id="UP000008871">
    <property type="component" value="Chromosome"/>
</dbReference>
<dbReference type="GO" id="GO:0003676">
    <property type="term" value="F:nucleic acid binding"/>
    <property type="evidence" value="ECO:0007669"/>
    <property type="project" value="InterPro"/>
</dbReference>
<dbReference type="CDD" id="cd20736">
    <property type="entry name" value="PoNe_Nuclease"/>
    <property type="match status" value="1"/>
</dbReference>
<dbReference type="Gene3D" id="3.40.1350.10">
    <property type="match status" value="1"/>
</dbReference>
<dbReference type="HAMAP" id="MF_00048">
    <property type="entry name" value="UPF0102"/>
    <property type="match status" value="1"/>
</dbReference>
<dbReference type="InterPro" id="IPR011335">
    <property type="entry name" value="Restrct_endonuc-II-like"/>
</dbReference>
<dbReference type="InterPro" id="IPR011856">
    <property type="entry name" value="tRNA_endonuc-like_dom_sf"/>
</dbReference>
<dbReference type="InterPro" id="IPR003509">
    <property type="entry name" value="UPF0102_YraN-like"/>
</dbReference>
<dbReference type="NCBIfam" id="NF009150">
    <property type="entry name" value="PRK12497.1-3"/>
    <property type="match status" value="1"/>
</dbReference>
<dbReference type="NCBIfam" id="TIGR00252">
    <property type="entry name" value="YraN family protein"/>
    <property type="match status" value="1"/>
</dbReference>
<dbReference type="PANTHER" id="PTHR34039">
    <property type="entry name" value="UPF0102 PROTEIN YRAN"/>
    <property type="match status" value="1"/>
</dbReference>
<dbReference type="PANTHER" id="PTHR34039:SF1">
    <property type="entry name" value="UPF0102 PROTEIN YRAN"/>
    <property type="match status" value="1"/>
</dbReference>
<dbReference type="Pfam" id="PF02021">
    <property type="entry name" value="UPF0102"/>
    <property type="match status" value="1"/>
</dbReference>
<dbReference type="SUPFAM" id="SSF52980">
    <property type="entry name" value="Restriction endonuclease-like"/>
    <property type="match status" value="1"/>
</dbReference>
<protein>
    <recommendedName>
        <fullName evidence="1">UPF0102 protein ABO_0585</fullName>
    </recommendedName>
</protein>
<gene>
    <name type="ordered locus">ABO_0585</name>
</gene>
<keyword id="KW-1185">Reference proteome</keyword>
<name>Y585_ALCBS</name>
<proteinExistence type="inferred from homology"/>
<evidence type="ECO:0000255" key="1">
    <source>
        <dbReference type="HAMAP-Rule" id="MF_00048"/>
    </source>
</evidence>
<reference key="1">
    <citation type="journal article" date="2006" name="Nat. Biotechnol.">
        <title>Genome sequence of the ubiquitous hydrocarbon-degrading marine bacterium Alcanivorax borkumensis.</title>
        <authorList>
            <person name="Schneiker S."/>
            <person name="Martins dos Santos V.A.P."/>
            <person name="Bartels D."/>
            <person name="Bekel T."/>
            <person name="Brecht M."/>
            <person name="Buhrmester J."/>
            <person name="Chernikova T.N."/>
            <person name="Denaro R."/>
            <person name="Ferrer M."/>
            <person name="Gertler C."/>
            <person name="Goesmann A."/>
            <person name="Golyshina O.V."/>
            <person name="Kaminski F."/>
            <person name="Khachane A.N."/>
            <person name="Lang S."/>
            <person name="Linke B."/>
            <person name="McHardy A.C."/>
            <person name="Meyer F."/>
            <person name="Nechitaylo T."/>
            <person name="Puehler A."/>
            <person name="Regenhardt D."/>
            <person name="Rupp O."/>
            <person name="Sabirova J.S."/>
            <person name="Selbitschka W."/>
            <person name="Yakimov M.M."/>
            <person name="Timmis K.N."/>
            <person name="Vorhoelter F.-J."/>
            <person name="Weidner S."/>
            <person name="Kaiser O."/>
            <person name="Golyshin P.N."/>
        </authorList>
    </citation>
    <scope>NUCLEOTIDE SEQUENCE [LARGE SCALE GENOMIC DNA]</scope>
    <source>
        <strain>ATCC 700651 / DSM 11573 / NCIMB 13689 / SK2</strain>
    </source>
</reference>
<organism>
    <name type="scientific">Alcanivorax borkumensis (strain ATCC 700651 / DSM 11573 / NCIMB 13689 / SK2)</name>
    <dbReference type="NCBI Taxonomy" id="393595"/>
    <lineage>
        <taxon>Bacteria</taxon>
        <taxon>Pseudomonadati</taxon>
        <taxon>Pseudomonadota</taxon>
        <taxon>Gammaproteobacteria</taxon>
        <taxon>Oceanospirillales</taxon>
        <taxon>Alcanivoracaceae</taxon>
        <taxon>Alcanivorax</taxon>
    </lineage>
</organism>
<comment type="similarity">
    <text evidence="1">Belongs to the UPF0102 family.</text>
</comment>
<accession>Q0VS15</accession>
<sequence>MPLLRSKKNTGRDAEKRAAKWLTGQGLSIVERNFHCRQGEIDLILLDQETLVFTEVRWRKHQSYGGALASVDQHKQRRLINAAQHFLARHPEHHHRPCRFDVLGMEPDSQQAVLYQWIQNAFYSE</sequence>